<reference key="1">
    <citation type="journal article" date="2000" name="Nature">
        <title>DNA sequence of both chromosomes of the cholera pathogen Vibrio cholerae.</title>
        <authorList>
            <person name="Heidelberg J.F."/>
            <person name="Eisen J.A."/>
            <person name="Nelson W.C."/>
            <person name="Clayton R.A."/>
            <person name="Gwinn M.L."/>
            <person name="Dodson R.J."/>
            <person name="Haft D.H."/>
            <person name="Hickey E.K."/>
            <person name="Peterson J.D."/>
            <person name="Umayam L.A."/>
            <person name="Gill S.R."/>
            <person name="Nelson K.E."/>
            <person name="Read T.D."/>
            <person name="Tettelin H."/>
            <person name="Richardson D.L."/>
            <person name="Ermolaeva M.D."/>
            <person name="Vamathevan J.J."/>
            <person name="Bass S."/>
            <person name="Qin H."/>
            <person name="Dragoi I."/>
            <person name="Sellers P."/>
            <person name="McDonald L.A."/>
            <person name="Utterback T.R."/>
            <person name="Fleischmann R.D."/>
            <person name="Nierman W.C."/>
            <person name="White O."/>
            <person name="Salzberg S.L."/>
            <person name="Smith H.O."/>
            <person name="Colwell R.R."/>
            <person name="Mekalanos J.J."/>
            <person name="Venter J.C."/>
            <person name="Fraser C.M."/>
        </authorList>
    </citation>
    <scope>NUCLEOTIDE SEQUENCE [LARGE SCALE GENOMIC DNA]</scope>
    <source>
        <strain>ATCC 39315 / El Tor Inaba N16961</strain>
    </source>
</reference>
<comment type="catalytic activity">
    <reaction evidence="1">
        <text>D-arabinose 5-phosphate + phosphoenolpyruvate + H2O = 3-deoxy-alpha-D-manno-2-octulosonate-8-phosphate + phosphate</text>
        <dbReference type="Rhea" id="RHEA:14053"/>
        <dbReference type="ChEBI" id="CHEBI:15377"/>
        <dbReference type="ChEBI" id="CHEBI:43474"/>
        <dbReference type="ChEBI" id="CHEBI:57693"/>
        <dbReference type="ChEBI" id="CHEBI:58702"/>
        <dbReference type="ChEBI" id="CHEBI:85985"/>
        <dbReference type="EC" id="2.5.1.55"/>
    </reaction>
</comment>
<comment type="pathway">
    <text evidence="1">Carbohydrate biosynthesis; 3-deoxy-D-manno-octulosonate biosynthesis; 3-deoxy-D-manno-octulosonate from D-ribulose 5-phosphate: step 2/3.</text>
</comment>
<comment type="pathway">
    <text evidence="1">Bacterial outer membrane biogenesis; lipopolysaccharide biosynthesis.</text>
</comment>
<comment type="subcellular location">
    <subcellularLocation>
        <location evidence="1">Cytoplasm</location>
    </subcellularLocation>
</comment>
<comment type="similarity">
    <text evidence="1">Belongs to the KdsA family.</text>
</comment>
<keyword id="KW-0963">Cytoplasm</keyword>
<keyword id="KW-0448">Lipopolysaccharide biosynthesis</keyword>
<keyword id="KW-1185">Reference proteome</keyword>
<keyword id="KW-0808">Transferase</keyword>
<organism>
    <name type="scientific">Vibrio cholerae serotype O1 (strain ATCC 39315 / El Tor Inaba N16961)</name>
    <dbReference type="NCBI Taxonomy" id="243277"/>
    <lineage>
        <taxon>Bacteria</taxon>
        <taxon>Pseudomonadati</taxon>
        <taxon>Pseudomonadota</taxon>
        <taxon>Gammaproteobacteria</taxon>
        <taxon>Vibrionales</taxon>
        <taxon>Vibrionaceae</taxon>
        <taxon>Vibrio</taxon>
    </lineage>
</organism>
<proteinExistence type="inferred from homology"/>
<feature type="chain" id="PRO_0000187168" description="2-dehydro-3-deoxyphosphooctonate aldolase">
    <location>
        <begin position="1"/>
        <end position="283"/>
    </location>
</feature>
<evidence type="ECO:0000255" key="1">
    <source>
        <dbReference type="HAMAP-Rule" id="MF_00056"/>
    </source>
</evidence>
<protein>
    <recommendedName>
        <fullName evidence="1">2-dehydro-3-deoxyphosphooctonate aldolase</fullName>
        <ecNumber evidence="1">2.5.1.55</ecNumber>
    </recommendedName>
    <alternativeName>
        <fullName evidence="1">3-deoxy-D-manno-octulosonic acid 8-phosphate synthase</fullName>
    </alternativeName>
    <alternativeName>
        <fullName evidence="1">KDO-8-phosphate synthase</fullName>
        <shortName evidence="1">KDO 8-P synthase</shortName>
        <shortName evidence="1">KDOPS</shortName>
    </alternativeName>
    <alternativeName>
        <fullName evidence="1">Phospho-2-dehydro-3-deoxyoctonate aldolase</fullName>
    </alternativeName>
</protein>
<gene>
    <name evidence="1" type="primary">kdsA</name>
    <name type="ordered locus">VC_2175</name>
</gene>
<sequence>MEHKIVHVGDIPVANDKPFTLFAGMNVLESRDLAMQICEHYVKVTDKLGIPYVFKASFDKANRSSVHSYRGPGLEEGMKIFQELKETFGVKIITDVHTEAQAQPVADVVDVIQLPAFLARQTDLVEAMAKTGAVINVKKPQFMSPGQVGNIVEKFAECGNDKVILCERGSCHGYDNLVVDMLGFGVMKQASNGSPIIFDVTHSLQMRDPSGAASGGRREQTVELAKAGLATGIAGLFIEAHPNPDKARCDGPSALPLDKLEPFLAQMKALDDLIKSFAHIDIR</sequence>
<accession>Q9KQ29</accession>
<dbReference type="EC" id="2.5.1.55" evidence="1"/>
<dbReference type="EMBL" id="AE003852">
    <property type="protein sequence ID" value="AAF95320.1"/>
    <property type="molecule type" value="Genomic_DNA"/>
</dbReference>
<dbReference type="PIR" id="F82108">
    <property type="entry name" value="F82108"/>
</dbReference>
<dbReference type="RefSeq" id="NP_231806.1">
    <property type="nucleotide sequence ID" value="NC_002505.1"/>
</dbReference>
<dbReference type="RefSeq" id="WP_000400335.1">
    <property type="nucleotide sequence ID" value="NZ_LT906614.1"/>
</dbReference>
<dbReference type="SMR" id="Q9KQ29"/>
<dbReference type="STRING" id="243277.VC_2175"/>
<dbReference type="DNASU" id="2613311"/>
<dbReference type="EnsemblBacteria" id="AAF95320">
    <property type="protein sequence ID" value="AAF95320"/>
    <property type="gene ID" value="VC_2175"/>
</dbReference>
<dbReference type="GeneID" id="69719211"/>
<dbReference type="KEGG" id="vch:VC_2175"/>
<dbReference type="PATRIC" id="fig|243277.26.peg.2073"/>
<dbReference type="eggNOG" id="COG2877">
    <property type="taxonomic scope" value="Bacteria"/>
</dbReference>
<dbReference type="HOGENOM" id="CLU_036666_0_0_6"/>
<dbReference type="UniPathway" id="UPA00030"/>
<dbReference type="UniPathway" id="UPA00357">
    <property type="reaction ID" value="UER00474"/>
</dbReference>
<dbReference type="Proteomes" id="UP000000584">
    <property type="component" value="Chromosome 1"/>
</dbReference>
<dbReference type="GO" id="GO:0005829">
    <property type="term" value="C:cytosol"/>
    <property type="evidence" value="ECO:0000318"/>
    <property type="project" value="GO_Central"/>
</dbReference>
<dbReference type="GO" id="GO:0008676">
    <property type="term" value="F:3-deoxy-8-phosphooctulonate synthase activity"/>
    <property type="evidence" value="ECO:0000318"/>
    <property type="project" value="GO_Central"/>
</dbReference>
<dbReference type="GO" id="GO:0019294">
    <property type="term" value="P:keto-3-deoxy-D-manno-octulosonic acid biosynthetic process"/>
    <property type="evidence" value="ECO:0000318"/>
    <property type="project" value="GO_Central"/>
</dbReference>
<dbReference type="FunFam" id="3.20.20.70:FF:000058">
    <property type="entry name" value="2-dehydro-3-deoxyphosphooctonate aldolase"/>
    <property type="match status" value="1"/>
</dbReference>
<dbReference type="Gene3D" id="3.20.20.70">
    <property type="entry name" value="Aldolase class I"/>
    <property type="match status" value="1"/>
</dbReference>
<dbReference type="HAMAP" id="MF_00056">
    <property type="entry name" value="KDO8P_synth"/>
    <property type="match status" value="1"/>
</dbReference>
<dbReference type="InterPro" id="IPR013785">
    <property type="entry name" value="Aldolase_TIM"/>
</dbReference>
<dbReference type="InterPro" id="IPR006218">
    <property type="entry name" value="DAHP1/KDSA"/>
</dbReference>
<dbReference type="InterPro" id="IPR006269">
    <property type="entry name" value="KDO8P_synthase"/>
</dbReference>
<dbReference type="NCBIfam" id="TIGR01362">
    <property type="entry name" value="KDO8P_synth"/>
    <property type="match status" value="1"/>
</dbReference>
<dbReference type="NCBIfam" id="NF003543">
    <property type="entry name" value="PRK05198.1"/>
    <property type="match status" value="1"/>
</dbReference>
<dbReference type="NCBIfam" id="NF009109">
    <property type="entry name" value="PRK12457.1"/>
    <property type="match status" value="1"/>
</dbReference>
<dbReference type="PANTHER" id="PTHR21057">
    <property type="entry name" value="PHOSPHO-2-DEHYDRO-3-DEOXYHEPTONATE ALDOLASE"/>
    <property type="match status" value="1"/>
</dbReference>
<dbReference type="Pfam" id="PF00793">
    <property type="entry name" value="DAHP_synth_1"/>
    <property type="match status" value="1"/>
</dbReference>
<dbReference type="SUPFAM" id="SSF51569">
    <property type="entry name" value="Aldolase"/>
    <property type="match status" value="1"/>
</dbReference>
<name>KDSA_VIBCH</name>